<feature type="chain" id="PRO_0000105746" description="HTH-type transcriptional regulator PtxR">
    <location>
        <begin position="1"/>
        <end position="312"/>
    </location>
</feature>
<feature type="domain" description="HTH lysR-type" evidence="1">
    <location>
        <begin position="11"/>
        <end position="68"/>
    </location>
</feature>
<feature type="DNA-binding region" description="H-T-H motif" evidence="1">
    <location>
        <begin position="28"/>
        <end position="47"/>
    </location>
</feature>
<feature type="mutagenesis site" description="Does not bind DNA." evidence="8">
    <original>K</original>
    <variation>A</variation>
    <location>
        <position position="39"/>
    </location>
</feature>
<feature type="mutagenesis site" description="Does not bind DNA." evidence="8">
    <original>S</original>
    <variation>A</variation>
    <location>
        <position position="40"/>
    </location>
</feature>
<feature type="mutagenesis site" description="Does not bind DNA." evidence="8">
    <original>E</original>
    <variation>A</variation>
    <location>
        <position position="44"/>
    </location>
</feature>
<feature type="mutagenesis site" description="Binds DNA with an affinity reduced by a factor of 2." evidence="8">
    <original>R</original>
    <variation>A</variation>
    <location>
        <position position="47"/>
    </location>
</feature>
<feature type="mutagenesis site" description="Does not bind DNA." evidence="8">
    <original>D</original>
    <variation>A</variation>
    <location>
        <position position="52"/>
    </location>
</feature>
<feature type="mutagenesis site" description="Abolishes interaction with PtxS but does not alter DNA binding." evidence="9">
    <original>V</original>
    <variation>A</variation>
    <location>
        <position position="173"/>
    </location>
</feature>
<feature type="mutagenesis site" description="Abolishes interaction with PtxS but does not alter DNA binding." evidence="9">
    <original>W</original>
    <variation>A</variation>
    <location>
        <position position="269"/>
    </location>
</feature>
<proteinExistence type="evidence at protein level"/>
<keyword id="KW-0010">Activator</keyword>
<keyword id="KW-0238">DNA-binding</keyword>
<keyword id="KW-1185">Reference proteome</keyword>
<keyword id="KW-0678">Repressor</keyword>
<keyword id="KW-0804">Transcription</keyword>
<keyword id="KW-0805">Transcription regulation</keyword>
<dbReference type="EMBL" id="AF012100">
    <property type="protein sequence ID" value="AAC26481.3"/>
    <property type="molecule type" value="Genomic_DNA"/>
</dbReference>
<dbReference type="EMBL" id="AE004091">
    <property type="protein sequence ID" value="AAG05646.1"/>
    <property type="molecule type" value="Genomic_DNA"/>
</dbReference>
<dbReference type="PIR" id="S77670">
    <property type="entry name" value="S77670"/>
</dbReference>
<dbReference type="RefSeq" id="NP_250948.1">
    <property type="nucleotide sequence ID" value="NC_002516.2"/>
</dbReference>
<dbReference type="RefSeq" id="WP_003089264.1">
    <property type="nucleotide sequence ID" value="NZ_QZGE01000014.1"/>
</dbReference>
<dbReference type="SMR" id="P72131"/>
<dbReference type="STRING" id="208964.PA2258"/>
<dbReference type="PaxDb" id="208964-PA2258"/>
<dbReference type="GeneID" id="878030"/>
<dbReference type="KEGG" id="pae:PA2258"/>
<dbReference type="PATRIC" id="fig|208964.12.peg.2360"/>
<dbReference type="PseudoCAP" id="PA2258"/>
<dbReference type="HOGENOM" id="CLU_039613_16_2_6"/>
<dbReference type="InParanoid" id="P72131"/>
<dbReference type="OrthoDB" id="9786526at2"/>
<dbReference type="PhylomeDB" id="P72131"/>
<dbReference type="BioCyc" id="PAER208964:G1FZ6-2297-MONOMER"/>
<dbReference type="Proteomes" id="UP000002438">
    <property type="component" value="Chromosome"/>
</dbReference>
<dbReference type="CollecTF" id="EXPREG_00000bd0"/>
<dbReference type="GO" id="GO:0032993">
    <property type="term" value="C:protein-DNA complex"/>
    <property type="evidence" value="ECO:0000353"/>
    <property type="project" value="CollecTF"/>
</dbReference>
<dbReference type="GO" id="GO:0001216">
    <property type="term" value="F:DNA-binding transcription activator activity"/>
    <property type="evidence" value="ECO:0000353"/>
    <property type="project" value="CollecTF"/>
</dbReference>
<dbReference type="GO" id="GO:0003950">
    <property type="term" value="F:NAD+ poly-ADP-ribosyltransferase activity"/>
    <property type="evidence" value="ECO:0000315"/>
    <property type="project" value="PseudoCAP"/>
</dbReference>
<dbReference type="GO" id="GO:0000976">
    <property type="term" value="F:transcription cis-regulatory region binding"/>
    <property type="evidence" value="ECO:0000353"/>
    <property type="project" value="CollecTF"/>
</dbReference>
<dbReference type="GO" id="GO:1900377">
    <property type="term" value="P:negative regulation of secondary metabolite biosynthetic process"/>
    <property type="evidence" value="ECO:0000315"/>
    <property type="project" value="PseudoCAP"/>
</dbReference>
<dbReference type="GO" id="GO:0045893">
    <property type="term" value="P:positive regulation of DNA-templated transcription"/>
    <property type="evidence" value="ECO:0000314"/>
    <property type="project" value="PseudoCAP"/>
</dbReference>
<dbReference type="GO" id="GO:0045862">
    <property type="term" value="P:positive regulation of proteolysis"/>
    <property type="evidence" value="ECO:0000315"/>
    <property type="project" value="PseudoCAP"/>
</dbReference>
<dbReference type="GO" id="GO:0006355">
    <property type="term" value="P:regulation of DNA-templated transcription"/>
    <property type="evidence" value="ECO:0000318"/>
    <property type="project" value="GO_Central"/>
</dbReference>
<dbReference type="CDD" id="cd08422">
    <property type="entry name" value="PBP2_CrgA_like"/>
    <property type="match status" value="1"/>
</dbReference>
<dbReference type="FunFam" id="1.10.10.10:FF:000001">
    <property type="entry name" value="LysR family transcriptional regulator"/>
    <property type="match status" value="1"/>
</dbReference>
<dbReference type="Gene3D" id="3.40.190.290">
    <property type="match status" value="1"/>
</dbReference>
<dbReference type="Gene3D" id="1.10.10.10">
    <property type="entry name" value="Winged helix-like DNA-binding domain superfamily/Winged helix DNA-binding domain"/>
    <property type="match status" value="1"/>
</dbReference>
<dbReference type="InterPro" id="IPR005119">
    <property type="entry name" value="LysR_subst-bd"/>
</dbReference>
<dbReference type="InterPro" id="IPR000847">
    <property type="entry name" value="Tscrpt_reg_HTH_LysR"/>
</dbReference>
<dbReference type="InterPro" id="IPR036388">
    <property type="entry name" value="WH-like_DNA-bd_sf"/>
</dbReference>
<dbReference type="InterPro" id="IPR036390">
    <property type="entry name" value="WH_DNA-bd_sf"/>
</dbReference>
<dbReference type="PANTHER" id="PTHR30537">
    <property type="entry name" value="HTH-TYPE TRANSCRIPTIONAL REGULATOR"/>
    <property type="match status" value="1"/>
</dbReference>
<dbReference type="PANTHER" id="PTHR30537:SF66">
    <property type="entry name" value="IRON-REGULATED VIRULENCE REGULATORY PROTEIN IRGB"/>
    <property type="match status" value="1"/>
</dbReference>
<dbReference type="Pfam" id="PF00126">
    <property type="entry name" value="HTH_1"/>
    <property type="match status" value="1"/>
</dbReference>
<dbReference type="Pfam" id="PF03466">
    <property type="entry name" value="LysR_substrate"/>
    <property type="match status" value="1"/>
</dbReference>
<dbReference type="PRINTS" id="PR00039">
    <property type="entry name" value="HTHLYSR"/>
</dbReference>
<dbReference type="SUPFAM" id="SSF53850">
    <property type="entry name" value="Periplasmic binding protein-like II"/>
    <property type="match status" value="1"/>
</dbReference>
<dbReference type="SUPFAM" id="SSF46785">
    <property type="entry name" value="Winged helix' DNA-binding domain"/>
    <property type="match status" value="1"/>
</dbReference>
<dbReference type="PROSITE" id="PS50931">
    <property type="entry name" value="HTH_LYSR"/>
    <property type="match status" value="1"/>
</dbReference>
<reference key="1">
    <citation type="journal article" date="1996" name="Mol. Microbiol.">
        <title>Isolation and characterization of a Pseudomonas aeruginosa gene, ptxR, which positively regulates exotoxin A production.</title>
        <authorList>
            <person name="Hamood A.N."/>
            <person name="Colmer J.A."/>
            <person name="Ochsner U.A."/>
            <person name="Vasil M.L."/>
        </authorList>
    </citation>
    <scope>NUCLEOTIDE SEQUENCE [GENOMIC DNA]</scope>
    <scope>FUNCTION</scope>
    <scope>DISRUPTION PHENOTYPE</scope>
    <source>
        <strain>ATCC 15692 / DSM 22644 / CIP 104116 / JCM 14847 / LMG 12228 / 1C / PRS 101 / PAO1</strain>
    </source>
</reference>
<reference key="2">
    <citation type="journal article" date="2000" name="Nature">
        <title>Complete genome sequence of Pseudomonas aeruginosa PAO1, an opportunistic pathogen.</title>
        <authorList>
            <person name="Stover C.K."/>
            <person name="Pham X.-Q.T."/>
            <person name="Erwin A.L."/>
            <person name="Mizoguchi S.D."/>
            <person name="Warrener P."/>
            <person name="Hickey M.J."/>
            <person name="Brinkman F.S.L."/>
            <person name="Hufnagle W.O."/>
            <person name="Kowalik D.J."/>
            <person name="Lagrou M."/>
            <person name="Garber R.L."/>
            <person name="Goltry L."/>
            <person name="Tolentino E."/>
            <person name="Westbrock-Wadman S."/>
            <person name="Yuan Y."/>
            <person name="Brody L.L."/>
            <person name="Coulter S.N."/>
            <person name="Folger K.R."/>
            <person name="Kas A."/>
            <person name="Larbig K."/>
            <person name="Lim R.M."/>
            <person name="Smith K.A."/>
            <person name="Spencer D.H."/>
            <person name="Wong G.K.-S."/>
            <person name="Wu Z."/>
            <person name="Paulsen I.T."/>
            <person name="Reizer J."/>
            <person name="Saier M.H. Jr."/>
            <person name="Hancock R.E.W."/>
            <person name="Lory S."/>
            <person name="Olson M.V."/>
        </authorList>
    </citation>
    <scope>NUCLEOTIDE SEQUENCE [LARGE SCALE GENOMIC DNA]</scope>
    <source>
        <strain>ATCC 15692 / DSM 22644 / CIP 104116 / JCM 14847 / LMG 12228 / 1C / PRS 101 / PAO1</strain>
    </source>
</reference>
<reference key="3">
    <citation type="journal article" date="1998" name="J. Bacteriol.">
        <title>The fur-regulated gene encoding the alternative sigma factor PvdS is required for iron-dependent expression of the LysR-type regulator ptxR in Pseudomonas aeruginosa.</title>
        <authorList>
            <person name="Vasil M.L."/>
            <person name="Ochsner U.A."/>
            <person name="Johnson Z."/>
            <person name="Colmer J.A."/>
            <person name="Hamood A.N."/>
        </authorList>
    </citation>
    <scope>TRANSCRIPTIONAL REGULATION</scope>
    <source>
        <strain>ATCC 15692 / DSM 22644 / CIP 104116 / JCM 14847 / LMG 12228 / 1C / PRS 101 / PAO1</strain>
    </source>
</reference>
<reference key="4">
    <citation type="journal article" date="1998" name="Mol. Gen. Genet.">
        <title>Characterization of ptxS, a Pseudomonas aeruginosa gene which interferes with the effect of the exotoxin A positive regulatory gene, ptxR.</title>
        <authorList>
            <person name="Colmer J.A."/>
            <person name="Hamood A.N."/>
        </authorList>
    </citation>
    <scope>ACTIVITY REGULATION</scope>
    <source>
        <strain>ATCC 15692 / DSM 22644 / CIP 104116 / JCM 14847 / LMG 12228 / 1C / PRS 101 / PAO1</strain>
        <strain>PA103</strain>
    </source>
</reference>
<reference key="5">
    <citation type="journal article" date="1999" name="Can. J. Microbiol.">
        <title>Expression of ptxR and its effect on toxA and regA expression during the growth cycle of Pseudomonas aeruginosa strain PAO1.</title>
        <authorList>
            <person name="Colmer J.A."/>
            <person name="Hamood A.N."/>
        </authorList>
    </citation>
    <scope>FUNCTION</scope>
</reference>
<reference key="6">
    <citation type="journal article" date="2005" name="Microbiology">
        <title>Effect of static growth and different levels of environmental oxygen on toxA and ptxR expression in the Pseudomonas aeruginosa strain PAO1.</title>
        <authorList>
            <person name="Gaines J.M."/>
            <person name="Carty N.L."/>
            <person name="Colmer-Hamood J.A."/>
            <person name="Hamood A.N."/>
        </authorList>
    </citation>
    <scope>TRANSCRIPTIONAL REGULATION</scope>
</reference>
<reference key="7">
    <citation type="journal article" date="2006" name="Can. J. Microbiol.">
        <title>Transcriptional analysis of the Pseudomonas aeruginosa toxA regulatory gene ptxR.</title>
        <authorList>
            <person name="Colmer-Hamood J.A."/>
            <person name="Aramaki H."/>
            <person name="Gaines J.M."/>
            <person name="Hamood A.N."/>
        </authorList>
    </citation>
    <scope>TRANSCRIPTIONAL REGULATION</scope>
</reference>
<reference key="8">
    <citation type="journal article" date="2006" name="Mol. Microbiol.">
        <title>PtxR modulates the expression of QS-controlled virulence factors in the Pseudomonas aeruginosa strain PAO1.</title>
        <authorList>
            <person name="Carty N.L."/>
            <person name="Layland N."/>
            <person name="Colmer-Hamood J.A."/>
            <person name="Calfee M.W."/>
            <person name="Pesci E.C."/>
            <person name="Hamood A.N."/>
        </authorList>
    </citation>
    <scope>FUNCTION</scope>
    <scope>DISRUPTION PHENOTYPE</scope>
</reference>
<reference key="9">
    <citation type="journal article" date="2007" name="Microbiology">
        <title>Regulation of the Pseudomonas aeruginosa toxA, regA and ptxR genes by the iron-starvation sigma factor PvdS under reduced levels of oxygen.</title>
        <authorList>
            <person name="Gaines J.M."/>
            <person name="Carty N.L."/>
            <person name="Tiburzi F."/>
            <person name="Davinic M."/>
            <person name="Visca P."/>
            <person name="Colmer-Hamood J.A."/>
            <person name="Hamood A.N."/>
        </authorList>
    </citation>
    <scope>TRANSCRIPTIONAL REGULATION</scope>
</reference>
<reference key="10">
    <citation type="journal article" date="2008" name="Microbiology">
        <title>Regulation of Pseudomonas aeruginosa ptxR by Vfr.</title>
        <authorList>
            <person name="Ferrell E."/>
            <person name="Carty N.L."/>
            <person name="Colmer-Hamood J.A."/>
            <person name="Hamood A.N."/>
            <person name="West S.E.H."/>
        </authorList>
    </citation>
    <scope>TRANSCRIPTIONAL REGULATION</scope>
</reference>
<reference key="11">
    <citation type="journal article" date="2012" name="PLoS ONE">
        <title>Genes for carbon metabolism and the ToxA virulence factor in Pseudomonas aeruginosa are regulated through molecular interactions of PtxR and PtxS.</title>
        <authorList>
            <person name="Daddaoua A."/>
            <person name="Fillet S."/>
            <person name="Fernandez M."/>
            <person name="Udaondo Z."/>
            <person name="Krell T."/>
            <person name="Ramos J.L."/>
        </authorList>
    </citation>
    <scope>FUNCTION</scope>
    <scope>ACTIVITY REGULATION</scope>
    <scope>INTERACTION WITH PTXS</scope>
    <scope>MUTAGENESIS OF LYS-39; SER-40; GLU-44; ARG-47 AND ASP-52</scope>
    <source>
        <strain>ATCC 15692 / DSM 22644 / CIP 104116 / JCM 14847 / LMG 12228 / 1C / PRS 101 / PAO1</strain>
    </source>
</reference>
<reference key="12">
    <citation type="journal article" date="2013" name="Nucleic Acids Res.">
        <title>Transcriptional control by two interacting regulatory proteins: identification of the PtxS binding site at PtxR.</title>
        <authorList>
            <person name="Daddaoua A."/>
            <person name="Krell T."/>
            <person name="Ramos J.L."/>
        </authorList>
    </citation>
    <scope>FUNCTION</scope>
    <scope>ACTIVITY REGULATION</scope>
    <scope>SUBUNIT</scope>
    <scope>INTERACTION WITH PTXS</scope>
    <scope>MUTAGENESIS OF VAL-173 AND TRP-269</scope>
</reference>
<name>PTXR_PSEAE</name>
<sequence length="312" mass="34992">MSAALERLNHLNLNHLYAFVAVAEHNSFTAAAEALGLSKSLLSEQLRRLEADLGIQLLTRTTRRMTLTDRGELLFGVAQRMLGELDGALSDVRDLQGEPSGRLRITAPQDFVKWHISSVSAAFIRQFPKVQVEMLADDQFSDLVGQRIDLAVRIGWPRDSGLHASKLCDFQQVAVATPGYLAGLPPVLQPHDLARCEWIGHTRLSTPWTWTFERQRERATVQTRGRLLANNTLAVYRLVLDGAGVSVLPSFLVAREIARGRLVRLLPGWRLPQGGIYALYPSARYMPVRVRAFIESLREHLGREPFRLAQSE</sequence>
<organism>
    <name type="scientific">Pseudomonas aeruginosa (strain ATCC 15692 / DSM 22644 / CIP 104116 / JCM 14847 / LMG 12228 / 1C / PRS 101 / PAO1)</name>
    <dbReference type="NCBI Taxonomy" id="208964"/>
    <lineage>
        <taxon>Bacteria</taxon>
        <taxon>Pseudomonadati</taxon>
        <taxon>Pseudomonadota</taxon>
        <taxon>Gammaproteobacteria</taxon>
        <taxon>Pseudomonadales</taxon>
        <taxon>Pseudomonadaceae</taxon>
        <taxon>Pseudomonas</taxon>
    </lineage>
</organism>
<comment type="function">
    <text evidence="2 5 8 10">Plays an important role in the regulation of the production of the virulence factor exotoxin A (toxA), via positive regulation of the transcription of the toxA gene (PubMed:10696480, PubMed:22844393, PubMed:8843437). Acts by binding directly to the toxA promoter region (PubMed:22844393). Besides toxA, PtxR modulates the expression of genes that code for the QS-controlled virulence factors (PubMed:16803594). It negatively regulates the expression of the rhamnolipid and pyocyanine genes, through the autoinducer synthase RhlI, and the PQS synthesis operon pqsABCDE, while it positively regulates the expression of lasB through the autoinducer synthase LasI (PubMed:16803594). Also positively regulates the expression of the exotoxin A regulatory protein (toxR or regA) (PubMed:10696480, PubMed:8843437).</text>
</comment>
<comment type="function">
    <text evidence="8 9">In addition, is involved in the positive regulation of glucose metabolism via the regulation of the expression of the kgu and gad operons (PubMed:22844393, PubMed:24019239). Acts by binding directly to the promoter region of the kgu and gad operons (PubMed:22844393, PubMed:24019239).</text>
</comment>
<comment type="activity regulation">
    <text evidence="8 9 11">Negatively regulated by PtxS, which interacts with PtxR and prevents its activity.</text>
</comment>
<comment type="subunit">
    <text evidence="8 9">Monomer in solution (PubMed:24019239). May dimerize on binding to DNA (PubMed:24019239). Interacts with PtxS in the absence of 2-ketogluconate (PubMed:22844393, PubMed:24019239). Binding of the 2-ketogluconate effector to PtxS causes PtxS/PtxR complex dissociation (PubMed:22844393, PubMed:24019239).</text>
</comment>
<comment type="induction">
    <text evidence="3 4 6 7 12">The level of expression at different time points of growth is generally low (PubMed:16000716, PubMed:16699585). Expression increases when P.aeruginosa is grown in static cultures and under reduced levels of environmental oxygen, two conditions that resemble the environment within the lung alveoli of cystic fibrosis patients (PubMed:16000716). The ptxR upstream region contains two independent transcription initiation sites (T1 and T2), and potential binding sites for multiple regulators (PubMed:16699585, PubMed:18048935, PubMed:18227247, PubMed:9852033). Under aerobic conditions in iron-deficient medium, ptxR expression follows a biphasic curve that involves the P1 promoter only (PubMed:16699585). Iron eliminates the second peak of expression but does not affect expression from the P2 promoter (PubMed:16699585). Under microaerobic conditions, iron represses expression from subclones that carry P1 alone or P2 alone at both early and late stages of growth (PubMed:16699585). Under anaerobic conditions, expression increases considerably (PubMed:16699585). P1 is recognized by sigma-70 (PubMed:16699585). Regulated by the iron-starvation sigma factor PvdS under reduced levels of oxygen (PubMed:18048935). Vfr may be required for P2 expression throughout the growth cycle in iron-deficient medium (PubMed:18227247).</text>
</comment>
<comment type="disruption phenotype">
    <text evidence="5 10">Mutant produces lower levels of exotoxin A (PubMed:8843437). Mutant also produces significantly more pyocyanine than its parent strain (PubMed:16803594).</text>
</comment>
<comment type="similarity">
    <text evidence="14">Belongs to the LysR transcriptional regulatory family.</text>
</comment>
<protein>
    <recommendedName>
        <fullName evidence="14">HTH-type transcriptional regulator PtxR</fullName>
    </recommendedName>
    <alternativeName>
        <fullName evidence="13">Pseudomonas exotoxin A regulator</fullName>
    </alternativeName>
</protein>
<accession>P72131</accession>
<accession>Q9R7G8</accession>
<evidence type="ECO:0000255" key="1">
    <source>
        <dbReference type="PROSITE-ProRule" id="PRU00253"/>
    </source>
</evidence>
<evidence type="ECO:0000269" key="2">
    <source>
    </source>
</evidence>
<evidence type="ECO:0000269" key="3">
    <source>
    </source>
</evidence>
<evidence type="ECO:0000269" key="4">
    <source>
    </source>
</evidence>
<evidence type="ECO:0000269" key="5">
    <source>
    </source>
</evidence>
<evidence type="ECO:0000269" key="6">
    <source>
    </source>
</evidence>
<evidence type="ECO:0000269" key="7">
    <source>
    </source>
</evidence>
<evidence type="ECO:0000269" key="8">
    <source>
    </source>
</evidence>
<evidence type="ECO:0000269" key="9">
    <source>
    </source>
</evidence>
<evidence type="ECO:0000269" key="10">
    <source>
    </source>
</evidence>
<evidence type="ECO:0000269" key="11">
    <source>
    </source>
</evidence>
<evidence type="ECO:0000269" key="12">
    <source>
    </source>
</evidence>
<evidence type="ECO:0000303" key="13">
    <source>
    </source>
</evidence>
<evidence type="ECO:0000305" key="14"/>
<gene>
    <name evidence="13" type="primary">ptxR</name>
    <name type="ordered locus">PA2258</name>
</gene>